<proteinExistence type="inferred from homology"/>
<feature type="chain" id="PRO_1000000129" description="Ribosome-binding factor A">
    <location>
        <begin position="1"/>
        <end position="119"/>
    </location>
</feature>
<gene>
    <name evidence="1" type="primary">rbfA</name>
    <name type="ordered locus">LACR_0818</name>
</gene>
<dbReference type="EMBL" id="CP000425">
    <property type="protein sequence ID" value="ABJ72371.1"/>
    <property type="molecule type" value="Genomic_DNA"/>
</dbReference>
<dbReference type="RefSeq" id="WP_011675738.1">
    <property type="nucleotide sequence ID" value="NC_008527.1"/>
</dbReference>
<dbReference type="SMR" id="Q030K1"/>
<dbReference type="GeneID" id="61109034"/>
<dbReference type="KEGG" id="llc:LACR_0818"/>
<dbReference type="HOGENOM" id="CLU_089475_3_0_9"/>
<dbReference type="Proteomes" id="UP000000240">
    <property type="component" value="Chromosome"/>
</dbReference>
<dbReference type="GO" id="GO:0005829">
    <property type="term" value="C:cytosol"/>
    <property type="evidence" value="ECO:0007669"/>
    <property type="project" value="TreeGrafter"/>
</dbReference>
<dbReference type="GO" id="GO:0043024">
    <property type="term" value="F:ribosomal small subunit binding"/>
    <property type="evidence" value="ECO:0007669"/>
    <property type="project" value="TreeGrafter"/>
</dbReference>
<dbReference type="GO" id="GO:0030490">
    <property type="term" value="P:maturation of SSU-rRNA"/>
    <property type="evidence" value="ECO:0007669"/>
    <property type="project" value="UniProtKB-UniRule"/>
</dbReference>
<dbReference type="Gene3D" id="3.30.300.20">
    <property type="match status" value="1"/>
</dbReference>
<dbReference type="HAMAP" id="MF_00003">
    <property type="entry name" value="RbfA"/>
    <property type="match status" value="1"/>
</dbReference>
<dbReference type="InterPro" id="IPR015946">
    <property type="entry name" value="KH_dom-like_a/b"/>
</dbReference>
<dbReference type="InterPro" id="IPR000238">
    <property type="entry name" value="RbfA"/>
</dbReference>
<dbReference type="InterPro" id="IPR023799">
    <property type="entry name" value="RbfA_dom_sf"/>
</dbReference>
<dbReference type="InterPro" id="IPR020053">
    <property type="entry name" value="Ribosome-bd_factorA_CS"/>
</dbReference>
<dbReference type="NCBIfam" id="TIGR00082">
    <property type="entry name" value="rbfA"/>
    <property type="match status" value="1"/>
</dbReference>
<dbReference type="PANTHER" id="PTHR33515">
    <property type="entry name" value="RIBOSOME-BINDING FACTOR A, CHLOROPLASTIC-RELATED"/>
    <property type="match status" value="1"/>
</dbReference>
<dbReference type="PANTHER" id="PTHR33515:SF1">
    <property type="entry name" value="RIBOSOME-BINDING FACTOR A, CHLOROPLASTIC-RELATED"/>
    <property type="match status" value="1"/>
</dbReference>
<dbReference type="Pfam" id="PF02033">
    <property type="entry name" value="RBFA"/>
    <property type="match status" value="1"/>
</dbReference>
<dbReference type="SUPFAM" id="SSF89919">
    <property type="entry name" value="Ribosome-binding factor A, RbfA"/>
    <property type="match status" value="1"/>
</dbReference>
<dbReference type="PROSITE" id="PS01319">
    <property type="entry name" value="RBFA"/>
    <property type="match status" value="1"/>
</dbReference>
<evidence type="ECO:0000255" key="1">
    <source>
        <dbReference type="HAMAP-Rule" id="MF_00003"/>
    </source>
</evidence>
<sequence length="119" mass="13417">MGNSFRSDRVAVEIQREINDILRNKVRDPRVQDVNITDVQLTGDLSQATVYYSLLSNLASDNEKAATALKKATGLFKSELAKRMTIFKIPDLTFAKDESVEYGSKIDELLRGLNDKSEY</sequence>
<keyword id="KW-0963">Cytoplasm</keyword>
<keyword id="KW-0690">Ribosome biogenesis</keyword>
<organism>
    <name type="scientific">Lactococcus lactis subsp. cremoris (strain SK11)</name>
    <dbReference type="NCBI Taxonomy" id="272622"/>
    <lineage>
        <taxon>Bacteria</taxon>
        <taxon>Bacillati</taxon>
        <taxon>Bacillota</taxon>
        <taxon>Bacilli</taxon>
        <taxon>Lactobacillales</taxon>
        <taxon>Streptococcaceae</taxon>
        <taxon>Lactococcus</taxon>
        <taxon>Lactococcus cremoris subsp. cremoris</taxon>
    </lineage>
</organism>
<protein>
    <recommendedName>
        <fullName evidence="1">Ribosome-binding factor A</fullName>
    </recommendedName>
</protein>
<reference key="1">
    <citation type="journal article" date="2006" name="Proc. Natl. Acad. Sci. U.S.A.">
        <title>Comparative genomics of the lactic acid bacteria.</title>
        <authorList>
            <person name="Makarova K.S."/>
            <person name="Slesarev A."/>
            <person name="Wolf Y.I."/>
            <person name="Sorokin A."/>
            <person name="Mirkin B."/>
            <person name="Koonin E.V."/>
            <person name="Pavlov A."/>
            <person name="Pavlova N."/>
            <person name="Karamychev V."/>
            <person name="Polouchine N."/>
            <person name="Shakhova V."/>
            <person name="Grigoriev I."/>
            <person name="Lou Y."/>
            <person name="Rohksar D."/>
            <person name="Lucas S."/>
            <person name="Huang K."/>
            <person name="Goodstein D.M."/>
            <person name="Hawkins T."/>
            <person name="Plengvidhya V."/>
            <person name="Welker D."/>
            <person name="Hughes J."/>
            <person name="Goh Y."/>
            <person name="Benson A."/>
            <person name="Baldwin K."/>
            <person name="Lee J.-H."/>
            <person name="Diaz-Muniz I."/>
            <person name="Dosti B."/>
            <person name="Smeianov V."/>
            <person name="Wechter W."/>
            <person name="Barabote R."/>
            <person name="Lorca G."/>
            <person name="Altermann E."/>
            <person name="Barrangou R."/>
            <person name="Ganesan B."/>
            <person name="Xie Y."/>
            <person name="Rawsthorne H."/>
            <person name="Tamir D."/>
            <person name="Parker C."/>
            <person name="Breidt F."/>
            <person name="Broadbent J.R."/>
            <person name="Hutkins R."/>
            <person name="O'Sullivan D."/>
            <person name="Steele J."/>
            <person name="Unlu G."/>
            <person name="Saier M.H. Jr."/>
            <person name="Klaenhammer T."/>
            <person name="Richardson P."/>
            <person name="Kozyavkin S."/>
            <person name="Weimer B.C."/>
            <person name="Mills D.A."/>
        </authorList>
    </citation>
    <scope>NUCLEOTIDE SEQUENCE [LARGE SCALE GENOMIC DNA]</scope>
    <source>
        <strain>SK11</strain>
    </source>
</reference>
<accession>Q030K1</accession>
<comment type="function">
    <text evidence="1">One of several proteins that assist in the late maturation steps of the functional core of the 30S ribosomal subunit. Associates with free 30S ribosomal subunits (but not with 30S subunits that are part of 70S ribosomes or polysomes). Required for efficient processing of 16S rRNA. May interact with the 5'-terminal helix region of 16S rRNA.</text>
</comment>
<comment type="subunit">
    <text evidence="1">Monomer. Binds 30S ribosomal subunits, but not 50S ribosomal subunits or 70S ribosomes.</text>
</comment>
<comment type="subcellular location">
    <subcellularLocation>
        <location evidence="1">Cytoplasm</location>
    </subcellularLocation>
</comment>
<comment type="similarity">
    <text evidence="1">Belongs to the RbfA family.</text>
</comment>
<name>RBFA_LACLS</name>